<name>Y1763_STAA8</name>
<comment type="similarity">
    <text evidence="2">Belongs to the UPF0758 family.</text>
</comment>
<keyword id="KW-0378">Hydrolase</keyword>
<keyword id="KW-0479">Metal-binding</keyword>
<keyword id="KW-0482">Metalloprotease</keyword>
<keyword id="KW-0645">Protease</keyword>
<keyword id="KW-1185">Reference proteome</keyword>
<keyword id="KW-0862">Zinc</keyword>
<sequence length="218" mass="24134">MPRERLLSHGAKSLSNTELLAILINTGRKGFSSIDISNELLKSASNLNELKKSSINDLIKVKGIGLQKAITLKAAFELGERMGRRAENNRIKITQPSDVADYMIPTMKDLTQEHFVILLLNSKNVVIKETCVFKGTLNSSIVHPREIFSIAVRENANAIIAVHNHPSGDVTPSQEDIITTMRLKECGLILGIDLLDHIIIGDNRFTSLVEAGYFDEND</sequence>
<accession>P31337</accession>
<accession>Q2FXS2</accession>
<reference key="1">
    <citation type="book" date="2006" name="Gram positive pathogens, 2nd edition">
        <title>The Staphylococcus aureus NCTC 8325 genome.</title>
        <editorList>
            <person name="Fischetti V."/>
            <person name="Novick R."/>
            <person name="Ferretti J."/>
            <person name="Portnoy D."/>
            <person name="Rood J."/>
        </editorList>
        <authorList>
            <person name="Gillaspy A.F."/>
            <person name="Worrell V."/>
            <person name="Orvis J."/>
            <person name="Roe B.A."/>
            <person name="Dyer D.W."/>
            <person name="Iandolo J.J."/>
        </authorList>
    </citation>
    <scope>NUCLEOTIDE SEQUENCE [LARGE SCALE GENOMIC DNA]</scope>
    <source>
        <strain>NCTC 8325 / PS 47</strain>
    </source>
</reference>
<reference key="2">
    <citation type="submission" date="1986-01" db="EMBL/GenBank/DDBJ databases">
        <authorList>
            <person name="Murphy E."/>
        </authorList>
    </citation>
    <scope>NUCLEOTIDE SEQUENCE [GENOMIC DNA] OF 133-214</scope>
</reference>
<reference key="3">
    <citation type="journal article" date="1984" name="Nature">
        <title>Transposition of Tn554 does not generate a target duplication.</title>
        <authorList>
            <person name="Murphy E."/>
            <person name="Loefdahl S."/>
        </authorList>
    </citation>
    <scope>PARTIAL NUCLEOTIDE SEQUENCE [GENOMIC DNA]</scope>
</reference>
<evidence type="ECO:0000255" key="1">
    <source>
        <dbReference type="PROSITE-ProRule" id="PRU01182"/>
    </source>
</evidence>
<evidence type="ECO:0000305" key="2"/>
<feature type="chain" id="PRO_0000190730" description="UPF0758 protein SAOUHSC_01763">
    <location>
        <begin position="1"/>
        <end position="218"/>
    </location>
</feature>
<feature type="domain" description="MPN" evidence="1">
    <location>
        <begin position="92"/>
        <end position="214"/>
    </location>
</feature>
<feature type="short sequence motif" description="JAMM motif" evidence="1">
    <location>
        <begin position="163"/>
        <end position="176"/>
    </location>
</feature>
<feature type="binding site" evidence="1">
    <location>
        <position position="163"/>
    </location>
    <ligand>
        <name>Zn(2+)</name>
        <dbReference type="ChEBI" id="CHEBI:29105"/>
        <note>catalytic</note>
    </ligand>
</feature>
<feature type="binding site" evidence="1">
    <location>
        <position position="165"/>
    </location>
    <ligand>
        <name>Zn(2+)</name>
        <dbReference type="ChEBI" id="CHEBI:29105"/>
        <note>catalytic</note>
    </ligand>
</feature>
<feature type="binding site" evidence="1">
    <location>
        <position position="176"/>
    </location>
    <ligand>
        <name>Zn(2+)</name>
        <dbReference type="ChEBI" id="CHEBI:29105"/>
        <note>catalytic</note>
    </ligand>
</feature>
<feature type="sequence conflict" description="In Ref. 2; AAA26680." evidence="2" ref="2">
    <original>YFDEND</original>
    <variation>TL</variation>
    <location>
        <begin position="213"/>
        <end position="218"/>
    </location>
</feature>
<organism>
    <name type="scientific">Staphylococcus aureus (strain NCTC 8325 / PS 47)</name>
    <dbReference type="NCBI Taxonomy" id="93061"/>
    <lineage>
        <taxon>Bacteria</taxon>
        <taxon>Bacillati</taxon>
        <taxon>Bacillota</taxon>
        <taxon>Bacilli</taxon>
        <taxon>Bacillales</taxon>
        <taxon>Staphylococcaceae</taxon>
        <taxon>Staphylococcus</taxon>
    </lineage>
</organism>
<gene>
    <name type="ordered locus">SAOUHSC_01763</name>
</gene>
<dbReference type="EMBL" id="CP000253">
    <property type="protein sequence ID" value="ABD30832.1"/>
    <property type="molecule type" value="Genomic_DNA"/>
</dbReference>
<dbReference type="EMBL" id="K02985">
    <property type="protein sequence ID" value="AAA26680.1"/>
    <property type="molecule type" value="Genomic_DNA"/>
</dbReference>
<dbReference type="RefSeq" id="WP_011443640.1">
    <property type="nucleotide sequence ID" value="NC_007795.1"/>
</dbReference>
<dbReference type="RefSeq" id="YP_500268.1">
    <property type="nucleotide sequence ID" value="NC_007795.1"/>
</dbReference>
<dbReference type="SMR" id="P31337"/>
<dbReference type="STRING" id="93061.SAOUHSC_01763"/>
<dbReference type="PaxDb" id="1280-SAXN108_1687"/>
<dbReference type="GeneID" id="3919681"/>
<dbReference type="KEGG" id="sao:SAOUHSC_01763"/>
<dbReference type="PATRIC" id="fig|93061.5.peg.1607"/>
<dbReference type="eggNOG" id="COG2003">
    <property type="taxonomic scope" value="Bacteria"/>
</dbReference>
<dbReference type="HOGENOM" id="CLU_073529_0_2_9"/>
<dbReference type="OrthoDB" id="9804482at2"/>
<dbReference type="Proteomes" id="UP000008816">
    <property type="component" value="Chromosome"/>
</dbReference>
<dbReference type="GO" id="GO:0046872">
    <property type="term" value="F:metal ion binding"/>
    <property type="evidence" value="ECO:0007669"/>
    <property type="project" value="UniProtKB-KW"/>
</dbReference>
<dbReference type="GO" id="GO:0008237">
    <property type="term" value="F:metallopeptidase activity"/>
    <property type="evidence" value="ECO:0007669"/>
    <property type="project" value="UniProtKB-KW"/>
</dbReference>
<dbReference type="GO" id="GO:0006508">
    <property type="term" value="P:proteolysis"/>
    <property type="evidence" value="ECO:0007669"/>
    <property type="project" value="UniProtKB-KW"/>
</dbReference>
<dbReference type="CDD" id="cd08071">
    <property type="entry name" value="MPN_DUF2466"/>
    <property type="match status" value="1"/>
</dbReference>
<dbReference type="Gene3D" id="3.40.140.10">
    <property type="entry name" value="Cytidine Deaminase, domain 2"/>
    <property type="match status" value="1"/>
</dbReference>
<dbReference type="InterPro" id="IPR037518">
    <property type="entry name" value="MPN"/>
</dbReference>
<dbReference type="InterPro" id="IPR025657">
    <property type="entry name" value="RadC_JAB"/>
</dbReference>
<dbReference type="InterPro" id="IPR010994">
    <property type="entry name" value="RuvA_2-like"/>
</dbReference>
<dbReference type="InterPro" id="IPR001405">
    <property type="entry name" value="UPF0758"/>
</dbReference>
<dbReference type="InterPro" id="IPR020891">
    <property type="entry name" value="UPF0758_CS"/>
</dbReference>
<dbReference type="InterPro" id="IPR046778">
    <property type="entry name" value="UPF0758_N"/>
</dbReference>
<dbReference type="NCBIfam" id="NF000642">
    <property type="entry name" value="PRK00024.1"/>
    <property type="match status" value="1"/>
</dbReference>
<dbReference type="NCBIfam" id="TIGR00608">
    <property type="entry name" value="radc"/>
    <property type="match status" value="1"/>
</dbReference>
<dbReference type="PANTHER" id="PTHR30471">
    <property type="entry name" value="DNA REPAIR PROTEIN RADC"/>
    <property type="match status" value="1"/>
</dbReference>
<dbReference type="PANTHER" id="PTHR30471:SF3">
    <property type="entry name" value="UPF0758 PROTEIN YEES-RELATED"/>
    <property type="match status" value="1"/>
</dbReference>
<dbReference type="Pfam" id="PF04002">
    <property type="entry name" value="RadC"/>
    <property type="match status" value="1"/>
</dbReference>
<dbReference type="Pfam" id="PF20582">
    <property type="entry name" value="UPF0758_N"/>
    <property type="match status" value="1"/>
</dbReference>
<dbReference type="SUPFAM" id="SSF102712">
    <property type="entry name" value="JAB1/MPN domain"/>
    <property type="match status" value="1"/>
</dbReference>
<dbReference type="SUPFAM" id="SSF47781">
    <property type="entry name" value="RuvA domain 2-like"/>
    <property type="match status" value="1"/>
</dbReference>
<dbReference type="PROSITE" id="PS50249">
    <property type="entry name" value="MPN"/>
    <property type="match status" value="1"/>
</dbReference>
<dbReference type="PROSITE" id="PS01302">
    <property type="entry name" value="UPF0758"/>
    <property type="match status" value="1"/>
</dbReference>
<proteinExistence type="inferred from homology"/>
<protein>
    <recommendedName>
        <fullName>UPF0758 protein SAOUHSC_01763</fullName>
    </recommendedName>
    <alternativeName>
        <fullName>25 kDa protein</fullName>
    </alternativeName>
</protein>